<dbReference type="EMBL" id="AE017282">
    <property type="protein sequence ID" value="AAU91458.1"/>
    <property type="molecule type" value="Genomic_DNA"/>
</dbReference>
<dbReference type="RefSeq" id="WP_010961598.1">
    <property type="nucleotide sequence ID" value="NC_002977.6"/>
</dbReference>
<dbReference type="SMR" id="Q605B4"/>
<dbReference type="STRING" id="243233.MCA2370"/>
<dbReference type="GeneID" id="88224572"/>
<dbReference type="KEGG" id="mca:MCA2370"/>
<dbReference type="eggNOG" id="COG0089">
    <property type="taxonomic scope" value="Bacteria"/>
</dbReference>
<dbReference type="HOGENOM" id="CLU_037562_3_1_6"/>
<dbReference type="Proteomes" id="UP000006821">
    <property type="component" value="Chromosome"/>
</dbReference>
<dbReference type="GO" id="GO:1990904">
    <property type="term" value="C:ribonucleoprotein complex"/>
    <property type="evidence" value="ECO:0007669"/>
    <property type="project" value="UniProtKB-KW"/>
</dbReference>
<dbReference type="GO" id="GO:0005840">
    <property type="term" value="C:ribosome"/>
    <property type="evidence" value="ECO:0007669"/>
    <property type="project" value="UniProtKB-KW"/>
</dbReference>
<dbReference type="GO" id="GO:0019843">
    <property type="term" value="F:rRNA binding"/>
    <property type="evidence" value="ECO:0007669"/>
    <property type="project" value="UniProtKB-UniRule"/>
</dbReference>
<dbReference type="GO" id="GO:0003735">
    <property type="term" value="F:structural constituent of ribosome"/>
    <property type="evidence" value="ECO:0007669"/>
    <property type="project" value="InterPro"/>
</dbReference>
<dbReference type="GO" id="GO:0006412">
    <property type="term" value="P:translation"/>
    <property type="evidence" value="ECO:0007669"/>
    <property type="project" value="UniProtKB-UniRule"/>
</dbReference>
<dbReference type="FunFam" id="3.30.70.330:FF:000001">
    <property type="entry name" value="50S ribosomal protein L23"/>
    <property type="match status" value="1"/>
</dbReference>
<dbReference type="Gene3D" id="3.30.70.330">
    <property type="match status" value="1"/>
</dbReference>
<dbReference type="HAMAP" id="MF_01369_B">
    <property type="entry name" value="Ribosomal_uL23_B"/>
    <property type="match status" value="1"/>
</dbReference>
<dbReference type="InterPro" id="IPR012677">
    <property type="entry name" value="Nucleotide-bd_a/b_plait_sf"/>
</dbReference>
<dbReference type="InterPro" id="IPR013025">
    <property type="entry name" value="Ribosomal_uL23-like"/>
</dbReference>
<dbReference type="InterPro" id="IPR012678">
    <property type="entry name" value="Ribosomal_uL23/eL15/eS24_sf"/>
</dbReference>
<dbReference type="NCBIfam" id="NF004359">
    <property type="entry name" value="PRK05738.1-3"/>
    <property type="match status" value="1"/>
</dbReference>
<dbReference type="NCBIfam" id="NF004363">
    <property type="entry name" value="PRK05738.2-4"/>
    <property type="match status" value="1"/>
</dbReference>
<dbReference type="NCBIfam" id="NF004366">
    <property type="entry name" value="PRK05738.3-2"/>
    <property type="match status" value="1"/>
</dbReference>
<dbReference type="PANTHER" id="PTHR11620">
    <property type="entry name" value="60S RIBOSOMAL PROTEIN L23A"/>
    <property type="match status" value="1"/>
</dbReference>
<dbReference type="Pfam" id="PF00276">
    <property type="entry name" value="Ribosomal_L23"/>
    <property type="match status" value="1"/>
</dbReference>
<dbReference type="SUPFAM" id="SSF54189">
    <property type="entry name" value="Ribosomal proteins S24e, L23 and L15e"/>
    <property type="match status" value="1"/>
</dbReference>
<evidence type="ECO:0000255" key="1">
    <source>
        <dbReference type="HAMAP-Rule" id="MF_01369"/>
    </source>
</evidence>
<evidence type="ECO:0000305" key="2"/>
<gene>
    <name evidence="1" type="primary">rplW</name>
    <name type="ordered locus">MCA2370</name>
</gene>
<comment type="function">
    <text evidence="1">One of the early assembly proteins it binds 23S rRNA. One of the proteins that surrounds the polypeptide exit tunnel on the outside of the ribosome. Forms the main docking site for trigger factor binding to the ribosome.</text>
</comment>
<comment type="subunit">
    <text evidence="1">Part of the 50S ribosomal subunit. Contacts protein L29, and trigger factor when it is bound to the ribosome.</text>
</comment>
<comment type="similarity">
    <text evidence="1">Belongs to the universal ribosomal protein uL23 family.</text>
</comment>
<proteinExistence type="inferred from homology"/>
<sequence length="97" mass="10957">MNQIELMRTLIAPVVSEKSTAGAEKNRQFVFRVKPAASKLQIKSAVELMFGVKVDSVRILNVKGKSKRFGRFMGQRSDWKKAYVKLKPGFDIELAVN</sequence>
<reference key="1">
    <citation type="journal article" date="2004" name="PLoS Biol.">
        <title>Genomic insights into methanotrophy: the complete genome sequence of Methylococcus capsulatus (Bath).</title>
        <authorList>
            <person name="Ward N.L."/>
            <person name="Larsen O."/>
            <person name="Sakwa J."/>
            <person name="Bruseth L."/>
            <person name="Khouri H.M."/>
            <person name="Durkin A.S."/>
            <person name="Dimitrov G."/>
            <person name="Jiang L."/>
            <person name="Scanlan D."/>
            <person name="Kang K.H."/>
            <person name="Lewis M.R."/>
            <person name="Nelson K.E."/>
            <person name="Methe B.A."/>
            <person name="Wu M."/>
            <person name="Heidelberg J.F."/>
            <person name="Paulsen I.T."/>
            <person name="Fouts D.E."/>
            <person name="Ravel J."/>
            <person name="Tettelin H."/>
            <person name="Ren Q."/>
            <person name="Read T.D."/>
            <person name="DeBoy R.T."/>
            <person name="Seshadri R."/>
            <person name="Salzberg S.L."/>
            <person name="Jensen H.B."/>
            <person name="Birkeland N.K."/>
            <person name="Nelson W.C."/>
            <person name="Dodson R.J."/>
            <person name="Grindhaug S.H."/>
            <person name="Holt I.E."/>
            <person name="Eidhammer I."/>
            <person name="Jonasen I."/>
            <person name="Vanaken S."/>
            <person name="Utterback T.R."/>
            <person name="Feldblyum T.V."/>
            <person name="Fraser C.M."/>
            <person name="Lillehaug J.R."/>
            <person name="Eisen J.A."/>
        </authorList>
    </citation>
    <scope>NUCLEOTIDE SEQUENCE [LARGE SCALE GENOMIC DNA]</scope>
    <source>
        <strain>ATCC 33009 / NCIMB 11132 / Bath</strain>
    </source>
</reference>
<keyword id="KW-1185">Reference proteome</keyword>
<keyword id="KW-0687">Ribonucleoprotein</keyword>
<keyword id="KW-0689">Ribosomal protein</keyword>
<keyword id="KW-0694">RNA-binding</keyword>
<keyword id="KW-0699">rRNA-binding</keyword>
<protein>
    <recommendedName>
        <fullName evidence="1">Large ribosomal subunit protein uL23</fullName>
    </recommendedName>
    <alternativeName>
        <fullName evidence="2">50S ribosomal protein L23</fullName>
    </alternativeName>
</protein>
<organism>
    <name type="scientific">Methylococcus capsulatus (strain ATCC 33009 / NCIMB 11132 / Bath)</name>
    <dbReference type="NCBI Taxonomy" id="243233"/>
    <lineage>
        <taxon>Bacteria</taxon>
        <taxon>Pseudomonadati</taxon>
        <taxon>Pseudomonadota</taxon>
        <taxon>Gammaproteobacteria</taxon>
        <taxon>Methylococcales</taxon>
        <taxon>Methylococcaceae</taxon>
        <taxon>Methylococcus</taxon>
    </lineage>
</organism>
<feature type="chain" id="PRO_0000272774" description="Large ribosomal subunit protein uL23">
    <location>
        <begin position="1"/>
        <end position="97"/>
    </location>
</feature>
<name>RL23_METCA</name>
<accession>Q605B4</accession>